<accession>A1XGR3</accession>
<sequence length="201" mass="22447">MPIGVPKVPFRIPGEEDAVWVDVYRLHRERLLFLGQGVDSEISNQLIGLMVYLSLEDETRDLFLFINSPGGWVVPGVAIYDTMQFVPPDVHTICMGLAASMGSFLLVGGEITKRIAFPHARVMIHQPASSFYEAQTGEFVLEAEELLKLRETLTRVYVQRTGNPLWVVSEDMERDVFMSATEAQAHGIVDFVAVENTGDFA</sequence>
<reference key="1">
    <citation type="journal article" date="2007" name="BMC Genomics">
        <title>Comparative chloroplast genomics: analyses including new sequences from the angiosperms Nuphar advena and Ranunculus macranthus.</title>
        <authorList>
            <person name="Raubeson L.A."/>
            <person name="Peery R."/>
            <person name="Chumley T.W."/>
            <person name="Dziubek C."/>
            <person name="Fourcade H.M."/>
            <person name="Boore J.L."/>
            <person name="Jansen R.K."/>
        </authorList>
    </citation>
    <scope>NUCLEOTIDE SEQUENCE [LARGE SCALE GENOMIC DNA]</scope>
</reference>
<name>CLPP_RANMC</name>
<proteinExistence type="inferred from homology"/>
<geneLocation type="chloroplast"/>
<organism>
    <name type="scientific">Ranunculus macranthus</name>
    <name type="common">Large buttercup</name>
    <dbReference type="NCBI Taxonomy" id="334596"/>
    <lineage>
        <taxon>Eukaryota</taxon>
        <taxon>Viridiplantae</taxon>
        <taxon>Streptophyta</taxon>
        <taxon>Embryophyta</taxon>
        <taxon>Tracheophyta</taxon>
        <taxon>Spermatophyta</taxon>
        <taxon>Magnoliopsida</taxon>
        <taxon>Ranunculales</taxon>
        <taxon>Ranunculaceae</taxon>
        <taxon>Ranunculoideae</taxon>
        <taxon>Ranunculeae</taxon>
        <taxon>Ranunculus</taxon>
    </lineage>
</organism>
<keyword id="KW-0150">Chloroplast</keyword>
<keyword id="KW-0378">Hydrolase</keyword>
<keyword id="KW-0934">Plastid</keyword>
<keyword id="KW-0645">Protease</keyword>
<keyword id="KW-0720">Serine protease</keyword>
<evidence type="ECO:0000255" key="1">
    <source>
        <dbReference type="HAMAP-Rule" id="MF_00444"/>
    </source>
</evidence>
<feature type="chain" id="PRO_0000309312" description="ATP-dependent Clp protease proteolytic subunit">
    <location>
        <begin position="1"/>
        <end position="201"/>
    </location>
</feature>
<feature type="active site" description="Nucleophile" evidence="1">
    <location>
        <position position="100"/>
    </location>
</feature>
<feature type="active site" evidence="1">
    <location>
        <position position="125"/>
    </location>
</feature>
<gene>
    <name evidence="1" type="primary">clpP</name>
</gene>
<dbReference type="EC" id="3.4.21.92" evidence="1"/>
<dbReference type="EMBL" id="DQ359689">
    <property type="protein sequence ID" value="ABC70781.1"/>
    <property type="molecule type" value="Genomic_DNA"/>
</dbReference>
<dbReference type="RefSeq" id="YP_001004211.1">
    <property type="nucleotide sequence ID" value="NC_008796.1"/>
</dbReference>
<dbReference type="SMR" id="A1XGR3"/>
<dbReference type="MEROPS" id="S14.002"/>
<dbReference type="GeneID" id="4712158"/>
<dbReference type="GO" id="GO:0009570">
    <property type="term" value="C:chloroplast stroma"/>
    <property type="evidence" value="ECO:0007669"/>
    <property type="project" value="UniProtKB-SubCell"/>
</dbReference>
<dbReference type="GO" id="GO:0009368">
    <property type="term" value="C:endopeptidase Clp complex"/>
    <property type="evidence" value="ECO:0007669"/>
    <property type="project" value="TreeGrafter"/>
</dbReference>
<dbReference type="GO" id="GO:0004176">
    <property type="term" value="F:ATP-dependent peptidase activity"/>
    <property type="evidence" value="ECO:0007669"/>
    <property type="project" value="InterPro"/>
</dbReference>
<dbReference type="GO" id="GO:0051117">
    <property type="term" value="F:ATPase binding"/>
    <property type="evidence" value="ECO:0007669"/>
    <property type="project" value="TreeGrafter"/>
</dbReference>
<dbReference type="GO" id="GO:0004252">
    <property type="term" value="F:serine-type endopeptidase activity"/>
    <property type="evidence" value="ECO:0007669"/>
    <property type="project" value="UniProtKB-UniRule"/>
</dbReference>
<dbReference type="GO" id="GO:0006515">
    <property type="term" value="P:protein quality control for misfolded or incompletely synthesized proteins"/>
    <property type="evidence" value="ECO:0007669"/>
    <property type="project" value="TreeGrafter"/>
</dbReference>
<dbReference type="CDD" id="cd07017">
    <property type="entry name" value="S14_ClpP_2"/>
    <property type="match status" value="1"/>
</dbReference>
<dbReference type="FunFam" id="3.90.226.10:FF:000006">
    <property type="entry name" value="ATP-dependent Clp protease proteolytic subunit"/>
    <property type="match status" value="1"/>
</dbReference>
<dbReference type="Gene3D" id="3.90.226.10">
    <property type="entry name" value="2-enoyl-CoA Hydratase, Chain A, domain 1"/>
    <property type="match status" value="1"/>
</dbReference>
<dbReference type="HAMAP" id="MF_00444">
    <property type="entry name" value="ClpP"/>
    <property type="match status" value="1"/>
</dbReference>
<dbReference type="InterPro" id="IPR001907">
    <property type="entry name" value="ClpP"/>
</dbReference>
<dbReference type="InterPro" id="IPR029045">
    <property type="entry name" value="ClpP/crotonase-like_dom_sf"/>
</dbReference>
<dbReference type="InterPro" id="IPR023562">
    <property type="entry name" value="ClpP/TepA"/>
</dbReference>
<dbReference type="InterPro" id="IPR033135">
    <property type="entry name" value="ClpP_His_AS"/>
</dbReference>
<dbReference type="InterPro" id="IPR018215">
    <property type="entry name" value="ClpP_Ser_AS"/>
</dbReference>
<dbReference type="PANTHER" id="PTHR10381">
    <property type="entry name" value="ATP-DEPENDENT CLP PROTEASE PROTEOLYTIC SUBUNIT"/>
    <property type="match status" value="1"/>
</dbReference>
<dbReference type="PANTHER" id="PTHR10381:SF15">
    <property type="entry name" value="CHLOROPLASTIC ATP-DEPENDENT CLP PROTEASE PROTEOLYTIC SUBUNIT 1"/>
    <property type="match status" value="1"/>
</dbReference>
<dbReference type="Pfam" id="PF00574">
    <property type="entry name" value="CLP_protease"/>
    <property type="match status" value="1"/>
</dbReference>
<dbReference type="PRINTS" id="PR00127">
    <property type="entry name" value="CLPPROTEASEP"/>
</dbReference>
<dbReference type="SUPFAM" id="SSF52096">
    <property type="entry name" value="ClpP/crotonase"/>
    <property type="match status" value="1"/>
</dbReference>
<dbReference type="PROSITE" id="PS00382">
    <property type="entry name" value="CLP_PROTEASE_HIS"/>
    <property type="match status" value="1"/>
</dbReference>
<dbReference type="PROSITE" id="PS00381">
    <property type="entry name" value="CLP_PROTEASE_SER"/>
    <property type="match status" value="1"/>
</dbReference>
<comment type="function">
    <text evidence="1">Cleaves peptides in various proteins in a process that requires ATP hydrolysis. Has a chymotrypsin-like activity. Plays a major role in the degradation of misfolded proteins.</text>
</comment>
<comment type="catalytic activity">
    <reaction evidence="1">
        <text>Hydrolysis of proteins to small peptides in the presence of ATP and magnesium. alpha-casein is the usual test substrate. In the absence of ATP, only oligopeptides shorter than five residues are hydrolyzed (such as succinyl-Leu-Tyr-|-NHMec, and Leu-Tyr-Leu-|-Tyr-Trp, in which cleavage of the -Tyr-|-Leu- and -Tyr-|-Trp bonds also occurs).</text>
        <dbReference type="EC" id="3.4.21.92"/>
    </reaction>
</comment>
<comment type="subunit">
    <text>Component of the chloroplastic Clp protease core complex.</text>
</comment>
<comment type="subcellular location">
    <subcellularLocation>
        <location evidence="1">Plastid</location>
        <location evidence="1">Chloroplast stroma</location>
    </subcellularLocation>
</comment>
<comment type="similarity">
    <text evidence="1">Belongs to the peptidase S14 family.</text>
</comment>
<protein>
    <recommendedName>
        <fullName evidence="1">ATP-dependent Clp protease proteolytic subunit</fullName>
        <ecNumber evidence="1">3.4.21.92</ecNumber>
    </recommendedName>
    <alternativeName>
        <fullName evidence="1">Endopeptidase Clp</fullName>
    </alternativeName>
</protein>